<keyword id="KW-0963">Cytoplasm</keyword>
<keyword id="KW-0255">Endonuclease</keyword>
<keyword id="KW-0378">Hydrolase</keyword>
<keyword id="KW-0460">Magnesium</keyword>
<keyword id="KW-0479">Metal-binding</keyword>
<keyword id="KW-0540">Nuclease</keyword>
<sequence length="300" mass="33072">MPSSFVSQLSPSLFSILREQLEKKGFTISIPPHTVFQGRSPTVSCTVYQSGKIVVQGKGTQEFVEFFLEPEILQTFSSQNVQQDLRSRIGVDESGKGDFFGPLCTAGVYASSPQAIEALYKTSICDSKLIPDAKILSLAQNIRSLCACKVITLFPEKYNALYANFQNLNSLLAWTHATIIDNLAPHPAGAVFAISDQFASSERVLLQAVRKKRSDIELIQRHRAEQDVVVAAASILAREAFLSSIHALESQYQIRLLKGASGKVKQRAKEILHNKGQVVLEKVCKTHFKTFNEVLGSGNQ</sequence>
<comment type="function">
    <text evidence="1">Endonuclease that specifically degrades the RNA of RNA-DNA hybrids.</text>
</comment>
<comment type="catalytic activity">
    <reaction evidence="1">
        <text>Endonucleolytic cleavage to 5'-phosphomonoester.</text>
        <dbReference type="EC" id="3.1.26.4"/>
    </reaction>
</comment>
<comment type="cofactor">
    <cofactor evidence="1">
        <name>Mn(2+)</name>
        <dbReference type="ChEBI" id="CHEBI:29035"/>
    </cofactor>
    <cofactor evidence="1">
        <name>Mg(2+)</name>
        <dbReference type="ChEBI" id="CHEBI:18420"/>
    </cofactor>
    <text evidence="1">Manganese or magnesium. Binds 1 divalent metal ion per monomer in the absence of substrate. May bind a second metal ion after substrate binding.</text>
</comment>
<comment type="subcellular location">
    <subcellularLocation>
        <location evidence="1">Cytoplasm</location>
    </subcellularLocation>
</comment>
<comment type="similarity">
    <text evidence="1">Belongs to the RNase HII family. RnhC subfamily.</text>
</comment>
<gene>
    <name evidence="1" type="primary">rnhC</name>
    <name type="ordered locus">CTLon_0258</name>
</gene>
<proteinExistence type="inferred from homology"/>
<dbReference type="EC" id="3.1.26.4" evidence="1"/>
<dbReference type="EMBL" id="AM884177">
    <property type="protein sequence ID" value="CAP06656.1"/>
    <property type="molecule type" value="Genomic_DNA"/>
</dbReference>
<dbReference type="RefSeq" id="WP_009872309.1">
    <property type="nucleotide sequence ID" value="NC_010280.2"/>
</dbReference>
<dbReference type="SMR" id="B0BAZ4"/>
<dbReference type="KEGG" id="ctl:CTLon_0258"/>
<dbReference type="HOGENOM" id="CLU_059546_0_0_0"/>
<dbReference type="Proteomes" id="UP001154401">
    <property type="component" value="Chromosome"/>
</dbReference>
<dbReference type="GO" id="GO:0005737">
    <property type="term" value="C:cytoplasm"/>
    <property type="evidence" value="ECO:0007669"/>
    <property type="project" value="UniProtKB-SubCell"/>
</dbReference>
<dbReference type="GO" id="GO:0032299">
    <property type="term" value="C:ribonuclease H2 complex"/>
    <property type="evidence" value="ECO:0007669"/>
    <property type="project" value="TreeGrafter"/>
</dbReference>
<dbReference type="GO" id="GO:0000287">
    <property type="term" value="F:magnesium ion binding"/>
    <property type="evidence" value="ECO:0007669"/>
    <property type="project" value="UniProtKB-UniRule"/>
</dbReference>
<dbReference type="GO" id="GO:0003723">
    <property type="term" value="F:RNA binding"/>
    <property type="evidence" value="ECO:0007669"/>
    <property type="project" value="InterPro"/>
</dbReference>
<dbReference type="GO" id="GO:0004523">
    <property type="term" value="F:RNA-DNA hybrid ribonuclease activity"/>
    <property type="evidence" value="ECO:0007669"/>
    <property type="project" value="UniProtKB-UniRule"/>
</dbReference>
<dbReference type="GO" id="GO:0043137">
    <property type="term" value="P:DNA replication, removal of RNA primer"/>
    <property type="evidence" value="ECO:0007669"/>
    <property type="project" value="TreeGrafter"/>
</dbReference>
<dbReference type="GO" id="GO:0006298">
    <property type="term" value="P:mismatch repair"/>
    <property type="evidence" value="ECO:0007669"/>
    <property type="project" value="TreeGrafter"/>
</dbReference>
<dbReference type="CDD" id="cd06590">
    <property type="entry name" value="RNase_HII_bacteria_HIII_like"/>
    <property type="match status" value="1"/>
</dbReference>
<dbReference type="CDD" id="cd14796">
    <property type="entry name" value="RNAse_HIII_N"/>
    <property type="match status" value="1"/>
</dbReference>
<dbReference type="FunFam" id="3.30.310.10:FF:000032">
    <property type="entry name" value="Ribonuclease HIII"/>
    <property type="match status" value="1"/>
</dbReference>
<dbReference type="Gene3D" id="3.30.420.10">
    <property type="entry name" value="Ribonuclease H-like superfamily/Ribonuclease H"/>
    <property type="match status" value="1"/>
</dbReference>
<dbReference type="Gene3D" id="3.30.310.10">
    <property type="entry name" value="TATA-Binding Protein"/>
    <property type="match status" value="1"/>
</dbReference>
<dbReference type="HAMAP" id="MF_00053">
    <property type="entry name" value="RNase_HIII"/>
    <property type="match status" value="1"/>
</dbReference>
<dbReference type="InterPro" id="IPR001352">
    <property type="entry name" value="RNase_HII/HIII"/>
</dbReference>
<dbReference type="InterPro" id="IPR024567">
    <property type="entry name" value="RNase_HII/HIII_dom"/>
</dbReference>
<dbReference type="InterPro" id="IPR004641">
    <property type="entry name" value="RNase_HIII"/>
</dbReference>
<dbReference type="InterPro" id="IPR024568">
    <property type="entry name" value="RNase_HIII_N"/>
</dbReference>
<dbReference type="InterPro" id="IPR012337">
    <property type="entry name" value="RNaseH-like_sf"/>
</dbReference>
<dbReference type="InterPro" id="IPR036397">
    <property type="entry name" value="RNaseH_sf"/>
</dbReference>
<dbReference type="InterPro" id="IPR012295">
    <property type="entry name" value="TBP_dom_sf"/>
</dbReference>
<dbReference type="NCBIfam" id="TIGR00716">
    <property type="entry name" value="rnhC"/>
    <property type="match status" value="1"/>
</dbReference>
<dbReference type="PANTHER" id="PTHR10954:SF23">
    <property type="entry name" value="RIBONUCLEASE"/>
    <property type="match status" value="1"/>
</dbReference>
<dbReference type="PANTHER" id="PTHR10954">
    <property type="entry name" value="RIBONUCLEASE H2 SUBUNIT A"/>
    <property type="match status" value="1"/>
</dbReference>
<dbReference type="Pfam" id="PF11858">
    <property type="entry name" value="DUF3378"/>
    <property type="match status" value="1"/>
</dbReference>
<dbReference type="Pfam" id="PF01351">
    <property type="entry name" value="RNase_HII"/>
    <property type="match status" value="1"/>
</dbReference>
<dbReference type="PIRSF" id="PIRSF037748">
    <property type="entry name" value="RnhC"/>
    <property type="match status" value="1"/>
</dbReference>
<dbReference type="SUPFAM" id="SSF53098">
    <property type="entry name" value="Ribonuclease H-like"/>
    <property type="match status" value="1"/>
</dbReference>
<dbReference type="PROSITE" id="PS51975">
    <property type="entry name" value="RNASE_H_2"/>
    <property type="match status" value="1"/>
</dbReference>
<accession>B0BAZ4</accession>
<name>RNH3_CHLTB</name>
<organism>
    <name type="scientific">Chlamydia trachomatis serovar L2b (strain UCH-1/proctitis)</name>
    <dbReference type="NCBI Taxonomy" id="471473"/>
    <lineage>
        <taxon>Bacteria</taxon>
        <taxon>Pseudomonadati</taxon>
        <taxon>Chlamydiota</taxon>
        <taxon>Chlamydiia</taxon>
        <taxon>Chlamydiales</taxon>
        <taxon>Chlamydiaceae</taxon>
        <taxon>Chlamydia/Chlamydophila group</taxon>
        <taxon>Chlamydia</taxon>
    </lineage>
</organism>
<evidence type="ECO:0000255" key="1">
    <source>
        <dbReference type="HAMAP-Rule" id="MF_00053"/>
    </source>
</evidence>
<evidence type="ECO:0000255" key="2">
    <source>
        <dbReference type="PROSITE-ProRule" id="PRU01319"/>
    </source>
</evidence>
<feature type="chain" id="PRO_1000091675" description="Ribonuclease HIII">
    <location>
        <begin position="1"/>
        <end position="300"/>
    </location>
</feature>
<feature type="domain" description="RNase H type-2" evidence="2">
    <location>
        <begin position="86"/>
        <end position="300"/>
    </location>
</feature>
<feature type="binding site" evidence="1">
    <location>
        <position position="92"/>
    </location>
    <ligand>
        <name>a divalent metal cation</name>
        <dbReference type="ChEBI" id="CHEBI:60240"/>
    </ligand>
</feature>
<feature type="binding site" evidence="1">
    <location>
        <position position="93"/>
    </location>
    <ligand>
        <name>a divalent metal cation</name>
        <dbReference type="ChEBI" id="CHEBI:60240"/>
    </ligand>
</feature>
<feature type="binding site" evidence="1">
    <location>
        <position position="196"/>
    </location>
    <ligand>
        <name>a divalent metal cation</name>
        <dbReference type="ChEBI" id="CHEBI:60240"/>
    </ligand>
</feature>
<protein>
    <recommendedName>
        <fullName evidence="1">Ribonuclease HIII</fullName>
        <shortName evidence="1">RNase HIII</shortName>
        <ecNumber evidence="1">3.1.26.4</ecNumber>
    </recommendedName>
</protein>
<reference key="1">
    <citation type="journal article" date="2008" name="Genome Res.">
        <title>Chlamydia trachomatis: genome sequence analysis of lymphogranuloma venereum isolates.</title>
        <authorList>
            <person name="Thomson N.R."/>
            <person name="Holden M.T.G."/>
            <person name="Carder C."/>
            <person name="Lennard N."/>
            <person name="Lockey S.J."/>
            <person name="Marsh P."/>
            <person name="Skipp P."/>
            <person name="O'Connor C.D."/>
            <person name="Goodhead I."/>
            <person name="Norbertzcak H."/>
            <person name="Harris B."/>
            <person name="Ormond D."/>
            <person name="Rance R."/>
            <person name="Quail M.A."/>
            <person name="Parkhill J."/>
            <person name="Stephens R.S."/>
            <person name="Clarke I.N."/>
        </authorList>
    </citation>
    <scope>NUCLEOTIDE SEQUENCE [LARGE SCALE GENOMIC DNA]</scope>
    <source>
        <strain>UCH-1/proctitis</strain>
    </source>
</reference>